<gene>
    <name evidence="1" type="primary">tmaR</name>
    <name type="ordered locus">SeHA_C2282</name>
</gene>
<reference key="1">
    <citation type="journal article" date="2011" name="J. Bacteriol.">
        <title>Comparative genomics of 28 Salmonella enterica isolates: evidence for CRISPR-mediated adaptive sublineage evolution.</title>
        <authorList>
            <person name="Fricke W.F."/>
            <person name="Mammel M.K."/>
            <person name="McDermott P.F."/>
            <person name="Tartera C."/>
            <person name="White D.G."/>
            <person name="Leclerc J.E."/>
            <person name="Ravel J."/>
            <person name="Cebula T.A."/>
        </authorList>
    </citation>
    <scope>NUCLEOTIDE SEQUENCE [LARGE SCALE GENOMIC DNA]</scope>
    <source>
        <strain>SL476</strain>
    </source>
</reference>
<organism>
    <name type="scientific">Salmonella heidelberg (strain SL476)</name>
    <dbReference type="NCBI Taxonomy" id="454169"/>
    <lineage>
        <taxon>Bacteria</taxon>
        <taxon>Pseudomonadati</taxon>
        <taxon>Pseudomonadota</taxon>
        <taxon>Gammaproteobacteria</taxon>
        <taxon>Enterobacterales</taxon>
        <taxon>Enterobacteriaceae</taxon>
        <taxon>Salmonella</taxon>
    </lineage>
</organism>
<dbReference type="EMBL" id="CP001120">
    <property type="protein sequence ID" value="ACF68087.1"/>
    <property type="molecule type" value="Genomic_DNA"/>
</dbReference>
<dbReference type="RefSeq" id="WP_000450405.1">
    <property type="nucleotide sequence ID" value="NC_011083.1"/>
</dbReference>
<dbReference type="SMR" id="B4T911"/>
<dbReference type="KEGG" id="seh:SeHA_C2282"/>
<dbReference type="HOGENOM" id="CLU_153146_0_0_6"/>
<dbReference type="Proteomes" id="UP000001866">
    <property type="component" value="Chromosome"/>
</dbReference>
<dbReference type="GO" id="GO:0005829">
    <property type="term" value="C:cytosol"/>
    <property type="evidence" value="ECO:0007669"/>
    <property type="project" value="TreeGrafter"/>
</dbReference>
<dbReference type="HAMAP" id="MF_00683">
    <property type="entry name" value="Pole_loc_TmaR"/>
    <property type="match status" value="1"/>
</dbReference>
<dbReference type="InterPro" id="IPR007458">
    <property type="entry name" value="DUF496"/>
</dbReference>
<dbReference type="InterPro" id="IPR053375">
    <property type="entry name" value="UPF0265"/>
</dbReference>
<dbReference type="NCBIfam" id="NF003844">
    <property type="entry name" value="PRK05423.1"/>
    <property type="match status" value="1"/>
</dbReference>
<dbReference type="NCBIfam" id="NF040881">
    <property type="entry name" value="PTS_reg_TmaR"/>
    <property type="match status" value="1"/>
</dbReference>
<dbReference type="PANTHER" id="PTHR39591">
    <property type="entry name" value="UPF0265 PROTEIN YEEX"/>
    <property type="match status" value="1"/>
</dbReference>
<dbReference type="PANTHER" id="PTHR39591:SF1">
    <property type="entry name" value="UPF0265 PROTEIN YEEX"/>
    <property type="match status" value="1"/>
</dbReference>
<dbReference type="Pfam" id="PF04363">
    <property type="entry name" value="DUF496"/>
    <property type="match status" value="1"/>
</dbReference>
<dbReference type="PIRSF" id="PIRSF028773">
    <property type="entry name" value="UCP028773"/>
    <property type="match status" value="1"/>
</dbReference>
<proteinExistence type="inferred from homology"/>
<feature type="chain" id="PRO_1000131775" description="Pole-localizer protein TmaR">
    <location>
        <begin position="1"/>
        <end position="111"/>
    </location>
</feature>
<feature type="coiled-coil region" evidence="1">
    <location>
        <begin position="14"/>
        <end position="41"/>
    </location>
</feature>
<comment type="function">
    <text evidence="1">Pole-localizer protein involved in the regulation of several cellular processes.</text>
</comment>
<comment type="subcellular location">
    <subcellularLocation>
        <location evidence="1">Cytoplasm</location>
    </subcellularLocation>
    <text evidence="1">Forms clusters that localize mainly near one pole of the cell.</text>
</comment>
<comment type="similarity">
    <text evidence="1">Belongs to the pole-localizer TmaR family.</text>
</comment>
<name>TMAR_SALHS</name>
<accession>B4T911</accession>
<sequence length="111" mass="13073">METTKPSFQDVLEFVRLFRRKNKLQREIQDIEKKIRDNQKRVLLLDNLSDYIKPGMSVEAIQGIIASMKSDYEDRVDDYIIKNAEISKERRDISKKLKAMGEMKHADVKAE</sequence>
<keyword id="KW-0175">Coiled coil</keyword>
<keyword id="KW-0963">Cytoplasm</keyword>
<protein>
    <recommendedName>
        <fullName evidence="1">Pole-localizer protein TmaR</fullName>
    </recommendedName>
</protein>
<evidence type="ECO:0000255" key="1">
    <source>
        <dbReference type="HAMAP-Rule" id="MF_00683"/>
    </source>
</evidence>